<feature type="chain" id="PRO_0000206831" description="Non-specific ribonucleoside hydrolase RihC">
    <location>
        <begin position="1"/>
        <end position="304"/>
    </location>
</feature>
<feature type="active site" evidence="1">
    <location>
        <position position="233"/>
    </location>
</feature>
<evidence type="ECO:0000250" key="1"/>
<evidence type="ECO:0000305" key="2"/>
<comment type="function">
    <text>Hydrolyzes both purine and pyrimidine ribonucleosides with a broad-substrate specificity with decreasing activity in the order uridine, xanthosine, inosine, adenosine, cytidine, guanosine.</text>
</comment>
<comment type="activity regulation">
    <text>Subject to catabolite repression.</text>
</comment>
<comment type="miscellaneous">
    <text>Strictly specific for ribonucleosides.</text>
</comment>
<comment type="similarity">
    <text evidence="2">Belongs to the IUNH family. RihC subfamily.</text>
</comment>
<dbReference type="EC" id="3.2.-.-"/>
<dbReference type="EMBL" id="X54945">
    <property type="protein sequence ID" value="CAA38708.1"/>
    <property type="molecule type" value="Genomic_DNA"/>
</dbReference>
<dbReference type="EMBL" id="U00096">
    <property type="protein sequence ID" value="AAC73141.1"/>
    <property type="molecule type" value="Genomic_DNA"/>
</dbReference>
<dbReference type="EMBL" id="AP009048">
    <property type="protein sequence ID" value="BAB96599.1"/>
    <property type="molecule type" value="Genomic_DNA"/>
</dbReference>
<dbReference type="PIR" id="JE0404">
    <property type="entry name" value="JE0404"/>
</dbReference>
<dbReference type="RefSeq" id="NP_414571.1">
    <property type="nucleotide sequence ID" value="NC_000913.3"/>
</dbReference>
<dbReference type="RefSeq" id="WP_001239142.1">
    <property type="nucleotide sequence ID" value="NZ_LN832404.1"/>
</dbReference>
<dbReference type="SMR" id="P22564"/>
<dbReference type="BioGRID" id="4261497">
    <property type="interactions" value="10"/>
</dbReference>
<dbReference type="BioGRID" id="849197">
    <property type="interactions" value="1"/>
</dbReference>
<dbReference type="DIP" id="DIP-11157N"/>
<dbReference type="FunCoup" id="P22564">
    <property type="interactions" value="538"/>
</dbReference>
<dbReference type="IntAct" id="P22564">
    <property type="interactions" value="2"/>
</dbReference>
<dbReference type="STRING" id="511145.b0030"/>
<dbReference type="jPOST" id="P22564"/>
<dbReference type="PaxDb" id="511145-b0030"/>
<dbReference type="EnsemblBacteria" id="AAC73141">
    <property type="protein sequence ID" value="AAC73141"/>
    <property type="gene ID" value="b0030"/>
</dbReference>
<dbReference type="GeneID" id="75169929"/>
<dbReference type="GeneID" id="944796"/>
<dbReference type="KEGG" id="ecj:JW0028"/>
<dbReference type="KEGG" id="eco:b0030"/>
<dbReference type="KEGG" id="ecoc:C3026_00145"/>
<dbReference type="PATRIC" id="fig|1411691.4.peg.2255"/>
<dbReference type="EchoBASE" id="EB1074"/>
<dbReference type="eggNOG" id="COG1957">
    <property type="taxonomic scope" value="Bacteria"/>
</dbReference>
<dbReference type="HOGENOM" id="CLU_036838_2_2_6"/>
<dbReference type="InParanoid" id="P22564"/>
<dbReference type="OMA" id="HMHDPFA"/>
<dbReference type="OrthoDB" id="9797882at2"/>
<dbReference type="PhylomeDB" id="P22564"/>
<dbReference type="BioCyc" id="EcoCyc:EG11082-MONOMER"/>
<dbReference type="BioCyc" id="MetaCyc:EG11082-MONOMER"/>
<dbReference type="PRO" id="PR:P22564"/>
<dbReference type="Proteomes" id="UP000000625">
    <property type="component" value="Chromosome"/>
</dbReference>
<dbReference type="GO" id="GO:0005829">
    <property type="term" value="C:cytosol"/>
    <property type="evidence" value="ECO:0000318"/>
    <property type="project" value="GO_Central"/>
</dbReference>
<dbReference type="GO" id="GO:0047622">
    <property type="term" value="F:adenosine nucleosidase activity"/>
    <property type="evidence" value="ECO:0000314"/>
    <property type="project" value="EcoCyc"/>
</dbReference>
<dbReference type="GO" id="GO:0047724">
    <property type="term" value="F:inosine nucleosidase activity"/>
    <property type="evidence" value="ECO:0000314"/>
    <property type="project" value="EcoCyc"/>
</dbReference>
<dbReference type="GO" id="GO:0008477">
    <property type="term" value="F:purine nucleosidase activity"/>
    <property type="evidence" value="ECO:0000318"/>
    <property type="project" value="GO_Central"/>
</dbReference>
<dbReference type="GO" id="GO:0050263">
    <property type="term" value="F:ribosylpyrimidine nucleosidase activity"/>
    <property type="evidence" value="ECO:0000314"/>
    <property type="project" value="EcoCyc"/>
</dbReference>
<dbReference type="GO" id="GO:0045437">
    <property type="term" value="F:uridine nucleosidase activity"/>
    <property type="evidence" value="ECO:0000314"/>
    <property type="project" value="EcoCyc"/>
</dbReference>
<dbReference type="GO" id="GO:0006974">
    <property type="term" value="P:DNA damage response"/>
    <property type="evidence" value="ECO:0000270"/>
    <property type="project" value="EcoliWiki"/>
</dbReference>
<dbReference type="GO" id="GO:0006144">
    <property type="term" value="P:purine nucleobase metabolic process"/>
    <property type="evidence" value="ECO:0007669"/>
    <property type="project" value="UniProtKB-UniRule"/>
</dbReference>
<dbReference type="GO" id="GO:0006152">
    <property type="term" value="P:purine nucleoside catabolic process"/>
    <property type="evidence" value="ECO:0000318"/>
    <property type="project" value="GO_Central"/>
</dbReference>
<dbReference type="GO" id="GO:0006206">
    <property type="term" value="P:pyrimidine nucleobase metabolic process"/>
    <property type="evidence" value="ECO:0007669"/>
    <property type="project" value="UniProtKB-UniRule"/>
</dbReference>
<dbReference type="GO" id="GO:0042454">
    <property type="term" value="P:ribonucleoside catabolic process"/>
    <property type="evidence" value="ECO:0000314"/>
    <property type="project" value="EcoCyc"/>
</dbReference>
<dbReference type="CDD" id="cd02651">
    <property type="entry name" value="nuc_hydro_IU_UC_XIUA"/>
    <property type="match status" value="1"/>
</dbReference>
<dbReference type="FunFam" id="3.90.245.10:FF:000002">
    <property type="entry name" value="Non-specific ribonucleoside hydrolase RihC"/>
    <property type="match status" value="1"/>
</dbReference>
<dbReference type="Gene3D" id="3.90.245.10">
    <property type="entry name" value="Ribonucleoside hydrolase-like"/>
    <property type="match status" value="1"/>
</dbReference>
<dbReference type="HAMAP" id="MF_01432">
    <property type="entry name" value="Nucleosid_hydro_RihC"/>
    <property type="match status" value="1"/>
</dbReference>
<dbReference type="InterPro" id="IPR015910">
    <property type="entry name" value="I/U_nuclsd_hydro_CS"/>
</dbReference>
<dbReference type="InterPro" id="IPR001910">
    <property type="entry name" value="Inosine/uridine_hydrolase_dom"/>
</dbReference>
<dbReference type="InterPro" id="IPR023186">
    <property type="entry name" value="IUNH"/>
</dbReference>
<dbReference type="InterPro" id="IPR022976">
    <property type="entry name" value="Nucleosid_hydro_RihC_nonspecif"/>
</dbReference>
<dbReference type="InterPro" id="IPR036452">
    <property type="entry name" value="Ribo_hydro-like"/>
</dbReference>
<dbReference type="NCBIfam" id="NF008036">
    <property type="entry name" value="PRK10768.1"/>
    <property type="match status" value="1"/>
</dbReference>
<dbReference type="PANTHER" id="PTHR12304">
    <property type="entry name" value="INOSINE-URIDINE PREFERRING NUCLEOSIDE HYDROLASE"/>
    <property type="match status" value="1"/>
</dbReference>
<dbReference type="PANTHER" id="PTHR12304:SF15">
    <property type="entry name" value="NON-SPECIFIC RIBONUCLEOSIDE HYDROLASE RIHC"/>
    <property type="match status" value="1"/>
</dbReference>
<dbReference type="Pfam" id="PF01156">
    <property type="entry name" value="IU_nuc_hydro"/>
    <property type="match status" value="1"/>
</dbReference>
<dbReference type="SUPFAM" id="SSF53590">
    <property type="entry name" value="Nucleoside hydrolase"/>
    <property type="match status" value="1"/>
</dbReference>
<dbReference type="PROSITE" id="PS01247">
    <property type="entry name" value="IUNH"/>
    <property type="match status" value="1"/>
</dbReference>
<accession>P22564</accession>
<sequence length="304" mass="32561">MRLPIFLDTDPGIDDAVAIAAAIFAPELDLQLMTTVAGNVSVEKTTRNALQLLHFWNAEIPLAQGAAVPLVRAPRDAASVHGESGMAGYDFVEHNRKPLGIPAFLAIRDALMRAPEPVTLVAIGPLTNIALLLSQCPECKPYIRRLVIMGGSAGRGNCTPNAEFNIAADPEAAACVFRSGIEIVMCGLDVTNQAILTPDYLSTLPQLNRTGKMLHALFSHYRSGSMQSGLRMHDLCAIAWLVRPDLFTLKPCFVAVETQGEFTSGTTVVDIDGCLGKPANVQVALDLDVKGFQQWVAEVLALAS</sequence>
<keyword id="KW-0326">Glycosidase</keyword>
<keyword id="KW-0378">Hydrolase</keyword>
<keyword id="KW-1185">Reference proteome</keyword>
<name>RIHC_ECOLI</name>
<organism>
    <name type="scientific">Escherichia coli (strain K12)</name>
    <dbReference type="NCBI Taxonomy" id="83333"/>
    <lineage>
        <taxon>Bacteria</taxon>
        <taxon>Pseudomonadati</taxon>
        <taxon>Pseudomonadota</taxon>
        <taxon>Gammaproteobacteria</taxon>
        <taxon>Enterobacterales</taxon>
        <taxon>Enterobacteriaceae</taxon>
        <taxon>Escherichia</taxon>
    </lineage>
</organism>
<proteinExistence type="evidence at protein level"/>
<protein>
    <recommendedName>
        <fullName>Non-specific ribonucleoside hydrolase RihC</fullName>
        <ecNumber>3.2.-.-</ecNumber>
    </recommendedName>
    <alternativeName>
        <fullName>Purine/pyrimidine ribonucleoside hydrolase</fullName>
    </alternativeName>
</protein>
<reference key="1">
    <citation type="journal article" date="1991" name="Nucleic Acids Res.">
        <title>Nucleotide sequence of the lsp-dapB interval in Escherichia coli.</title>
        <authorList>
            <person name="Bouvier J."/>
            <person name="Stragier P."/>
        </authorList>
    </citation>
    <scope>NUCLEOTIDE SEQUENCE [GENOMIC DNA]</scope>
    <source>
        <strain>K12</strain>
    </source>
</reference>
<reference key="2">
    <citation type="journal article" date="1992" name="Nucleic Acids Res.">
        <title>Systematic sequencing of the Escherichia coli genome: analysis of the 0-2.4 min region.</title>
        <authorList>
            <person name="Yura T."/>
            <person name="Mori H."/>
            <person name="Nagai H."/>
            <person name="Nagata T."/>
            <person name="Ishihama A."/>
            <person name="Fujita N."/>
            <person name="Isono K."/>
            <person name="Mizobuchi K."/>
            <person name="Nakata A."/>
        </authorList>
    </citation>
    <scope>NUCLEOTIDE SEQUENCE [LARGE SCALE GENOMIC DNA]</scope>
    <source>
        <strain>K12</strain>
    </source>
</reference>
<reference key="3">
    <citation type="journal article" date="1997" name="Science">
        <title>The complete genome sequence of Escherichia coli K-12.</title>
        <authorList>
            <person name="Blattner F.R."/>
            <person name="Plunkett G. III"/>
            <person name="Bloch C.A."/>
            <person name="Perna N.T."/>
            <person name="Burland V."/>
            <person name="Riley M."/>
            <person name="Collado-Vides J."/>
            <person name="Glasner J.D."/>
            <person name="Rode C.K."/>
            <person name="Mayhew G.F."/>
            <person name="Gregor J."/>
            <person name="Davis N.W."/>
            <person name="Kirkpatrick H.A."/>
            <person name="Goeden M.A."/>
            <person name="Rose D.J."/>
            <person name="Mau B."/>
            <person name="Shao Y."/>
        </authorList>
    </citation>
    <scope>NUCLEOTIDE SEQUENCE [LARGE SCALE GENOMIC DNA]</scope>
    <source>
        <strain>K12 / MG1655 / ATCC 47076</strain>
    </source>
</reference>
<reference key="4">
    <citation type="journal article" date="2006" name="Mol. Syst. Biol.">
        <title>Highly accurate genome sequences of Escherichia coli K-12 strains MG1655 and W3110.</title>
        <authorList>
            <person name="Hayashi K."/>
            <person name="Morooka N."/>
            <person name="Yamamoto Y."/>
            <person name="Fujita K."/>
            <person name="Isono K."/>
            <person name="Choi S."/>
            <person name="Ohtsubo E."/>
            <person name="Baba T."/>
            <person name="Wanner B.L."/>
            <person name="Mori H."/>
            <person name="Horiuchi T."/>
        </authorList>
    </citation>
    <scope>NUCLEOTIDE SEQUENCE [LARGE SCALE GENOMIC DNA]</scope>
    <source>
        <strain>K12 / W3110 / ATCC 27325 / DSM 5911</strain>
    </source>
</reference>
<reference key="5">
    <citation type="journal article" date="2001" name="J. Biol. Chem.">
        <title>The RihA, RihB, and RihC ribonucleoside hydrolases of Escherichia coli. Substrate specificity, gene expression, and regulation.</title>
        <authorList>
            <person name="Petersen C."/>
            <person name="Moeller L.B."/>
        </authorList>
    </citation>
    <scope>CHARACTERIZATION</scope>
</reference>
<gene>
    <name type="primary">rihC</name>
    <name type="synonym">yaaF</name>
    <name type="ordered locus">b0030</name>
    <name type="ordered locus">JW0028</name>
</gene>